<gene>
    <name type="primary">slyD</name>
    <name type="ordered locus">VC_2604</name>
</gene>
<reference key="1">
    <citation type="journal article" date="2000" name="Nature">
        <title>DNA sequence of both chromosomes of the cholera pathogen Vibrio cholerae.</title>
        <authorList>
            <person name="Heidelberg J.F."/>
            <person name="Eisen J.A."/>
            <person name="Nelson W.C."/>
            <person name="Clayton R.A."/>
            <person name="Gwinn M.L."/>
            <person name="Dodson R.J."/>
            <person name="Haft D.H."/>
            <person name="Hickey E.K."/>
            <person name="Peterson J.D."/>
            <person name="Umayam L.A."/>
            <person name="Gill S.R."/>
            <person name="Nelson K.E."/>
            <person name="Read T.D."/>
            <person name="Tettelin H."/>
            <person name="Richardson D.L."/>
            <person name="Ermolaeva M.D."/>
            <person name="Vamathevan J.J."/>
            <person name="Bass S."/>
            <person name="Qin H."/>
            <person name="Dragoi I."/>
            <person name="Sellers P."/>
            <person name="McDonald L.A."/>
            <person name="Utterback T.R."/>
            <person name="Fleischmann R.D."/>
            <person name="Nierman W.C."/>
            <person name="White O."/>
            <person name="Salzberg S.L."/>
            <person name="Smith H.O."/>
            <person name="Colwell R.R."/>
            <person name="Mekalanos J.J."/>
            <person name="Venter J.C."/>
            <person name="Fraser C.M."/>
        </authorList>
    </citation>
    <scope>NUCLEOTIDE SEQUENCE [LARGE SCALE GENOMIC DNA]</scope>
    <source>
        <strain>ATCC 39315 / El Tor Inaba N16961</strain>
    </source>
</reference>
<reference key="2">
    <citation type="journal article" date="2006" name="Biochemistry">
        <title>SlyD proteins from different species exhibit high prolyl isomerase and chaperone activities.</title>
        <authorList>
            <person name="Scholz C."/>
            <person name="Eckert B."/>
            <person name="Hagn F."/>
            <person name="Schaarschmidt P."/>
            <person name="Balbach J."/>
            <person name="Schmid F.X."/>
        </authorList>
    </citation>
    <scope>FUNCTION AS A CHAPERONE AND A PPIASE</scope>
    <scope>CATALYTIC ACTIVITY</scope>
</reference>
<feature type="chain" id="PRO_0000392672" description="FKBP-type peptidyl-prolyl cis-trans isomerase SlyD">
    <location>
        <begin position="1"/>
        <end position="201"/>
    </location>
</feature>
<feature type="domain" description="PPIase FKBP-type" evidence="3">
    <location>
        <begin position="6"/>
        <end position="95"/>
    </location>
</feature>
<feature type="region of interest" description="PPIase first part" evidence="1">
    <location>
        <begin position="1"/>
        <end position="69"/>
    </location>
</feature>
<feature type="region of interest" description="IF-chaperone" evidence="1">
    <location>
        <begin position="76"/>
        <end position="120"/>
    </location>
</feature>
<feature type="region of interest" description="PPIase second part" evidence="1">
    <location>
        <begin position="129"/>
        <end position="151"/>
    </location>
</feature>
<feature type="binding site" evidence="2">
    <location>
        <position position="172"/>
    </location>
    <ligand>
        <name>Ni(2+)</name>
        <dbReference type="ChEBI" id="CHEBI:49786"/>
    </ligand>
</feature>
<feature type="binding site" evidence="2">
    <location>
        <position position="173"/>
    </location>
    <ligand>
        <name>Ni(2+)</name>
        <dbReference type="ChEBI" id="CHEBI:49786"/>
    </ligand>
</feature>
<feature type="binding site" evidence="2">
    <location>
        <position position="192"/>
    </location>
    <ligand>
        <name>Ni(2+)</name>
        <dbReference type="ChEBI" id="CHEBI:49786"/>
    </ligand>
</feature>
<feature type="binding site" evidence="2">
    <location>
        <position position="198"/>
    </location>
    <ligand>
        <name>Ni(2+)</name>
        <dbReference type="ChEBI" id="CHEBI:49786"/>
    </ligand>
</feature>
<protein>
    <recommendedName>
        <fullName>FKBP-type peptidyl-prolyl cis-trans isomerase SlyD</fullName>
        <shortName>PPIase</shortName>
        <ecNumber>5.2.1.8</ecNumber>
    </recommendedName>
    <alternativeName>
        <fullName>Metallochaperone SlyD</fullName>
    </alternativeName>
</protein>
<name>SLYD_VIBCH</name>
<accession>Q9KNX6</accession>
<comment type="function">
    <text evidence="4">Folding helper with both chaperone and peptidyl-prolyl cis-trans isomerase (PPIase) activities. Chaperone activity prevents aggregation of unfolded or partially folded proteins and promotes their correct folding. PPIases catalyze the cis-trans isomerization of Xaa-Pro bonds of peptides, which accelerates slow steps of protein folding and thus shortens the lifetime of intermediates. Both strategies lower the concentration of intermediates and increase the productivity and yield of the folding reaction.</text>
</comment>
<comment type="function">
    <text evidence="1">Also involved in hydrogenase metallocenter assembly, probably by participating in the nickel insertion step. This function in hydrogenase biosynthesis requires chaperone activity and the presence of the metal-binding domain, but not PPIase activity (By similarity).</text>
</comment>
<comment type="catalytic activity">
    <reaction evidence="4">
        <text>[protein]-peptidylproline (omega=180) = [protein]-peptidylproline (omega=0)</text>
        <dbReference type="Rhea" id="RHEA:16237"/>
        <dbReference type="Rhea" id="RHEA-COMP:10747"/>
        <dbReference type="Rhea" id="RHEA-COMP:10748"/>
        <dbReference type="ChEBI" id="CHEBI:83833"/>
        <dbReference type="ChEBI" id="CHEBI:83834"/>
        <dbReference type="EC" id="5.2.1.8"/>
    </reaction>
</comment>
<comment type="subcellular location">
    <subcellularLocation>
        <location evidence="1">Cytoplasm</location>
    </subcellularLocation>
</comment>
<comment type="domain">
    <text evidence="1">The N-terminal region consists of two globular folded domains that contain prolyl isomerase and chaperone activities.</text>
</comment>
<comment type="domain">
    <text evidence="1">The C-terminal region binds nickel ions.</text>
</comment>
<comment type="similarity">
    <text evidence="5">Belongs to the FKBP-type PPIase family.</text>
</comment>
<evidence type="ECO:0000250" key="1"/>
<evidence type="ECO:0000255" key="2"/>
<evidence type="ECO:0000255" key="3">
    <source>
        <dbReference type="PROSITE-ProRule" id="PRU00277"/>
    </source>
</evidence>
<evidence type="ECO:0000269" key="4">
    <source>
    </source>
</evidence>
<evidence type="ECO:0000305" key="5"/>
<proteinExistence type="evidence at protein level"/>
<keyword id="KW-0143">Chaperone</keyword>
<keyword id="KW-0963">Cytoplasm</keyword>
<keyword id="KW-0413">Isomerase</keyword>
<keyword id="KW-0479">Metal-binding</keyword>
<keyword id="KW-0533">Nickel</keyword>
<keyword id="KW-1185">Reference proteome</keyword>
<keyword id="KW-0697">Rotamase</keyword>
<sequence length="201" mass="21248">MKIEKNTVASLAYQLTIEDGVVVDQSTVDAPLDYLHGHNNLITGLERELEGKVAGDKFTVTIAPEDAYGEHNEDLVQRVPADVFQGVDELEVGMRFLADTDQGPIPVEITEVDGDEVVVDGNHMLAGQSLTFTVEVVAVRAATEDEIAHGHIHQAGGCGHDHDHDHDHEGGCCGGEGHGHDHHGHGKKEGGCCGGGGCGSH</sequence>
<organism>
    <name type="scientific">Vibrio cholerae serotype O1 (strain ATCC 39315 / El Tor Inaba N16961)</name>
    <dbReference type="NCBI Taxonomy" id="243277"/>
    <lineage>
        <taxon>Bacteria</taxon>
        <taxon>Pseudomonadati</taxon>
        <taxon>Pseudomonadota</taxon>
        <taxon>Gammaproteobacteria</taxon>
        <taxon>Vibrionales</taxon>
        <taxon>Vibrionaceae</taxon>
        <taxon>Vibrio</taxon>
    </lineage>
</organism>
<dbReference type="EC" id="5.2.1.8"/>
<dbReference type="EMBL" id="AE003852">
    <property type="protein sequence ID" value="AAF95745.1"/>
    <property type="molecule type" value="Genomic_DNA"/>
</dbReference>
<dbReference type="PIR" id="H82055">
    <property type="entry name" value="H82055"/>
</dbReference>
<dbReference type="RefSeq" id="NP_232232.1">
    <property type="nucleotide sequence ID" value="NC_002505.1"/>
</dbReference>
<dbReference type="RefSeq" id="WP_000687664.1">
    <property type="nucleotide sequence ID" value="NZ_LT906614.1"/>
</dbReference>
<dbReference type="SMR" id="Q9KNX6"/>
<dbReference type="STRING" id="243277.VC_2604"/>
<dbReference type="DNASU" id="2615621"/>
<dbReference type="EnsemblBacteria" id="AAF95745">
    <property type="protein sequence ID" value="AAF95745"/>
    <property type="gene ID" value="VC_2604"/>
</dbReference>
<dbReference type="GeneID" id="89513419"/>
<dbReference type="KEGG" id="vch:VC_2604"/>
<dbReference type="PATRIC" id="fig|243277.26.peg.2483"/>
<dbReference type="eggNOG" id="COG1047">
    <property type="taxonomic scope" value="Bacteria"/>
</dbReference>
<dbReference type="HOGENOM" id="CLU_098197_1_0_6"/>
<dbReference type="Proteomes" id="UP000000584">
    <property type="component" value="Chromosome 1"/>
</dbReference>
<dbReference type="GO" id="GO:0005829">
    <property type="term" value="C:cytosol"/>
    <property type="evidence" value="ECO:0000318"/>
    <property type="project" value="GO_Central"/>
</dbReference>
<dbReference type="GO" id="GO:0046872">
    <property type="term" value="F:metal ion binding"/>
    <property type="evidence" value="ECO:0007669"/>
    <property type="project" value="UniProtKB-KW"/>
</dbReference>
<dbReference type="GO" id="GO:0003755">
    <property type="term" value="F:peptidyl-prolyl cis-trans isomerase activity"/>
    <property type="evidence" value="ECO:0000314"/>
    <property type="project" value="UniProtKB"/>
</dbReference>
<dbReference type="GO" id="GO:0042026">
    <property type="term" value="P:protein refolding"/>
    <property type="evidence" value="ECO:0000314"/>
    <property type="project" value="UniProtKB"/>
</dbReference>
<dbReference type="FunFam" id="2.40.10.330:FF:000001">
    <property type="entry name" value="Peptidyl-prolyl cis-trans isomerase"/>
    <property type="match status" value="1"/>
</dbReference>
<dbReference type="Gene3D" id="2.40.10.330">
    <property type="match status" value="1"/>
</dbReference>
<dbReference type="Gene3D" id="3.10.50.40">
    <property type="match status" value="1"/>
</dbReference>
<dbReference type="InterPro" id="IPR046357">
    <property type="entry name" value="PPIase_dom_sf"/>
</dbReference>
<dbReference type="InterPro" id="IPR001179">
    <property type="entry name" value="PPIase_FKBP_dom"/>
</dbReference>
<dbReference type="InterPro" id="IPR048261">
    <property type="entry name" value="SlpA/SlyD-like_ins_sf"/>
</dbReference>
<dbReference type="NCBIfam" id="NF008008">
    <property type="entry name" value="PRK10737.1"/>
    <property type="match status" value="1"/>
</dbReference>
<dbReference type="PANTHER" id="PTHR47861">
    <property type="entry name" value="FKBP-TYPE PEPTIDYL-PROLYL CIS-TRANS ISOMERASE SLYD"/>
    <property type="match status" value="1"/>
</dbReference>
<dbReference type="PANTHER" id="PTHR47861:SF3">
    <property type="entry name" value="FKBP-TYPE PEPTIDYL-PROLYL CIS-TRANS ISOMERASE SLYD"/>
    <property type="match status" value="1"/>
</dbReference>
<dbReference type="Pfam" id="PF00254">
    <property type="entry name" value="FKBP_C"/>
    <property type="match status" value="1"/>
</dbReference>
<dbReference type="SUPFAM" id="SSF54534">
    <property type="entry name" value="FKBP-like"/>
    <property type="match status" value="1"/>
</dbReference>
<dbReference type="PROSITE" id="PS50059">
    <property type="entry name" value="FKBP_PPIASE"/>
    <property type="match status" value="1"/>
</dbReference>